<proteinExistence type="inferred from homology"/>
<name>RL6_HELPY</name>
<protein>
    <recommendedName>
        <fullName evidence="1">Large ribosomal subunit protein uL6</fullName>
    </recommendedName>
    <alternativeName>
        <fullName evidence="2">50S ribosomal protein L6</fullName>
    </alternativeName>
</protein>
<comment type="function">
    <text evidence="1">This protein binds to the 23S rRNA, and is important in its secondary structure. It is located near the subunit interface in the base of the L7/L12 stalk, and near the tRNA binding site of the peptidyltransferase center.</text>
</comment>
<comment type="subunit">
    <text evidence="1">Part of the 50S ribosomal subunit.</text>
</comment>
<comment type="similarity">
    <text evidence="1">Belongs to the universal ribosomal protein uL6 family.</text>
</comment>
<keyword id="KW-1185">Reference proteome</keyword>
<keyword id="KW-0687">Ribonucleoprotein</keyword>
<keyword id="KW-0689">Ribosomal protein</keyword>
<keyword id="KW-0694">RNA-binding</keyword>
<keyword id="KW-0699">rRNA-binding</keyword>
<sequence length="178" mass="19486">MSRIGKRIIEIPSSVQASVEGSKLLFKNSKEKHELETHNRVKITLENNQLSFQPVGEDAQSRAYWGTYGALANNIVIGLSTGFSKTLEVNGVGYKVALGNKTLDLSLGFSHPVKYPIPAGIEMVVEKNTITIKGSDKQKVGQVAAEIRSFRPPEPYKGKGVKYSDEVIIRKAGKTAKK</sequence>
<gene>
    <name evidence="1" type="primary">rplF</name>
    <name type="ordered locus">HP_1304</name>
</gene>
<feature type="chain" id="PRO_0000131052" description="Large ribosomal subunit protein uL6">
    <location>
        <begin position="1"/>
        <end position="178"/>
    </location>
</feature>
<evidence type="ECO:0000255" key="1">
    <source>
        <dbReference type="HAMAP-Rule" id="MF_01365"/>
    </source>
</evidence>
<evidence type="ECO:0000305" key="2"/>
<reference key="1">
    <citation type="journal article" date="1997" name="Nature">
        <title>The complete genome sequence of the gastric pathogen Helicobacter pylori.</title>
        <authorList>
            <person name="Tomb J.-F."/>
            <person name="White O."/>
            <person name="Kerlavage A.R."/>
            <person name="Clayton R.A."/>
            <person name="Sutton G.G."/>
            <person name="Fleischmann R.D."/>
            <person name="Ketchum K.A."/>
            <person name="Klenk H.-P."/>
            <person name="Gill S.R."/>
            <person name="Dougherty B.A."/>
            <person name="Nelson K.E."/>
            <person name="Quackenbush J."/>
            <person name="Zhou L."/>
            <person name="Kirkness E.F."/>
            <person name="Peterson S.N."/>
            <person name="Loftus B.J."/>
            <person name="Richardson D.L."/>
            <person name="Dodson R.J."/>
            <person name="Khalak H.G."/>
            <person name="Glodek A."/>
            <person name="McKenney K."/>
            <person name="FitzGerald L.M."/>
            <person name="Lee N."/>
            <person name="Adams M.D."/>
            <person name="Hickey E.K."/>
            <person name="Berg D.E."/>
            <person name="Gocayne J.D."/>
            <person name="Utterback T.R."/>
            <person name="Peterson J.D."/>
            <person name="Kelley J.M."/>
            <person name="Cotton M.D."/>
            <person name="Weidman J.F."/>
            <person name="Fujii C."/>
            <person name="Bowman C."/>
            <person name="Watthey L."/>
            <person name="Wallin E."/>
            <person name="Hayes W.S."/>
            <person name="Borodovsky M."/>
            <person name="Karp P.D."/>
            <person name="Smith H.O."/>
            <person name="Fraser C.M."/>
            <person name="Venter J.C."/>
        </authorList>
    </citation>
    <scope>NUCLEOTIDE SEQUENCE [LARGE SCALE GENOMIC DNA]</scope>
    <source>
        <strain>ATCC 700392 / 26695</strain>
    </source>
</reference>
<organism>
    <name type="scientific">Helicobacter pylori (strain ATCC 700392 / 26695)</name>
    <name type="common">Campylobacter pylori</name>
    <dbReference type="NCBI Taxonomy" id="85962"/>
    <lineage>
        <taxon>Bacteria</taxon>
        <taxon>Pseudomonadati</taxon>
        <taxon>Campylobacterota</taxon>
        <taxon>Epsilonproteobacteria</taxon>
        <taxon>Campylobacterales</taxon>
        <taxon>Helicobacteraceae</taxon>
        <taxon>Helicobacter</taxon>
    </lineage>
</organism>
<dbReference type="EMBL" id="AE000511">
    <property type="protein sequence ID" value="AAD08345.1"/>
    <property type="molecule type" value="Genomic_DNA"/>
</dbReference>
<dbReference type="PIR" id="H64682">
    <property type="entry name" value="H64682"/>
</dbReference>
<dbReference type="RefSeq" id="NP_208096.1">
    <property type="nucleotide sequence ID" value="NC_000915.1"/>
</dbReference>
<dbReference type="RefSeq" id="WP_000086592.1">
    <property type="nucleotide sequence ID" value="NC_018939.1"/>
</dbReference>
<dbReference type="SMR" id="P56034"/>
<dbReference type="FunCoup" id="P56034">
    <property type="interactions" value="428"/>
</dbReference>
<dbReference type="STRING" id="85962.HP_1304"/>
<dbReference type="PaxDb" id="85962-C694_06735"/>
<dbReference type="EnsemblBacteria" id="AAD08345">
    <property type="protein sequence ID" value="AAD08345"/>
    <property type="gene ID" value="HP_1304"/>
</dbReference>
<dbReference type="KEGG" id="heo:C694_06735"/>
<dbReference type="KEGG" id="hpy:HP_1304"/>
<dbReference type="PATRIC" id="fig|85962.47.peg.1398"/>
<dbReference type="eggNOG" id="COG0097">
    <property type="taxonomic scope" value="Bacteria"/>
</dbReference>
<dbReference type="InParanoid" id="P56034"/>
<dbReference type="OrthoDB" id="9805007at2"/>
<dbReference type="PhylomeDB" id="P56034"/>
<dbReference type="Proteomes" id="UP000000429">
    <property type="component" value="Chromosome"/>
</dbReference>
<dbReference type="GO" id="GO:0022625">
    <property type="term" value="C:cytosolic large ribosomal subunit"/>
    <property type="evidence" value="ECO:0000318"/>
    <property type="project" value="GO_Central"/>
</dbReference>
<dbReference type="GO" id="GO:0019843">
    <property type="term" value="F:rRNA binding"/>
    <property type="evidence" value="ECO:0007669"/>
    <property type="project" value="UniProtKB-UniRule"/>
</dbReference>
<dbReference type="GO" id="GO:0003735">
    <property type="term" value="F:structural constituent of ribosome"/>
    <property type="evidence" value="ECO:0000318"/>
    <property type="project" value="GO_Central"/>
</dbReference>
<dbReference type="GO" id="GO:0002181">
    <property type="term" value="P:cytoplasmic translation"/>
    <property type="evidence" value="ECO:0000318"/>
    <property type="project" value="GO_Central"/>
</dbReference>
<dbReference type="FunFam" id="3.90.930.12:FF:000001">
    <property type="entry name" value="50S ribosomal protein L6"/>
    <property type="match status" value="1"/>
</dbReference>
<dbReference type="FunFam" id="3.90.930.12:FF:000010">
    <property type="entry name" value="50S ribosomal protein L6"/>
    <property type="match status" value="1"/>
</dbReference>
<dbReference type="Gene3D" id="3.90.930.12">
    <property type="entry name" value="Ribosomal protein L6, alpha-beta domain"/>
    <property type="match status" value="2"/>
</dbReference>
<dbReference type="HAMAP" id="MF_01365_B">
    <property type="entry name" value="Ribosomal_uL6_B"/>
    <property type="match status" value="1"/>
</dbReference>
<dbReference type="InterPro" id="IPR000702">
    <property type="entry name" value="Ribosomal_uL6-like"/>
</dbReference>
<dbReference type="InterPro" id="IPR036789">
    <property type="entry name" value="Ribosomal_uL6-like_a/b-dom_sf"/>
</dbReference>
<dbReference type="InterPro" id="IPR020040">
    <property type="entry name" value="Ribosomal_uL6_a/b-dom"/>
</dbReference>
<dbReference type="InterPro" id="IPR019906">
    <property type="entry name" value="Ribosomal_uL6_bac-type"/>
</dbReference>
<dbReference type="InterPro" id="IPR002358">
    <property type="entry name" value="Ribosomal_uL6_CS"/>
</dbReference>
<dbReference type="NCBIfam" id="TIGR03654">
    <property type="entry name" value="L6_bact"/>
    <property type="match status" value="1"/>
</dbReference>
<dbReference type="PANTHER" id="PTHR11655">
    <property type="entry name" value="60S/50S RIBOSOMAL PROTEIN L6/L9"/>
    <property type="match status" value="1"/>
</dbReference>
<dbReference type="PANTHER" id="PTHR11655:SF14">
    <property type="entry name" value="LARGE RIBOSOMAL SUBUNIT PROTEIN UL6M"/>
    <property type="match status" value="1"/>
</dbReference>
<dbReference type="Pfam" id="PF00347">
    <property type="entry name" value="Ribosomal_L6"/>
    <property type="match status" value="1"/>
</dbReference>
<dbReference type="PIRSF" id="PIRSF002162">
    <property type="entry name" value="Ribosomal_L6"/>
    <property type="match status" value="1"/>
</dbReference>
<dbReference type="PRINTS" id="PR00059">
    <property type="entry name" value="RIBOSOMALL6"/>
</dbReference>
<dbReference type="SUPFAM" id="SSF56053">
    <property type="entry name" value="Ribosomal protein L6"/>
    <property type="match status" value="2"/>
</dbReference>
<dbReference type="PROSITE" id="PS00525">
    <property type="entry name" value="RIBOSOMAL_L6_1"/>
    <property type="match status" value="1"/>
</dbReference>
<accession>P56034</accession>